<name>CYB_ARAGI</name>
<proteinExistence type="inferred from homology"/>
<comment type="function">
    <text evidence="2">Component of the ubiquinol-cytochrome c reductase complex (complex III or cytochrome b-c1 complex) that is part of the mitochondrial respiratory chain. The b-c1 complex mediates electron transfer from ubiquinol to cytochrome c. Contributes to the generation of a proton gradient across the mitochondrial membrane that is then used for ATP synthesis.</text>
</comment>
<comment type="cofactor">
    <cofactor evidence="2">
        <name>heme b</name>
        <dbReference type="ChEBI" id="CHEBI:60344"/>
    </cofactor>
    <text evidence="2">Binds 2 heme b groups non-covalently.</text>
</comment>
<comment type="subunit">
    <text evidence="2">The cytochrome bc1 complex contains 3 respiratory subunits (MT-CYB, CYC1 and UQCRFS1), 2 core proteins (UQCRC1 and UQCRC2) and probably 6 low-molecular weight proteins.</text>
</comment>
<comment type="subcellular location">
    <subcellularLocation>
        <location evidence="2">Mitochondrion inner membrane</location>
        <topology evidence="2">Multi-pass membrane protein</topology>
    </subcellularLocation>
</comment>
<comment type="miscellaneous">
    <text evidence="1">Heme 1 (or BL or b562) is low-potential and absorbs at about 562 nm, and heme 2 (or BH or b566) is high-potential and absorbs at about 566 nm.</text>
</comment>
<comment type="similarity">
    <text evidence="3 4">Belongs to the cytochrome b family.</text>
</comment>
<comment type="caution">
    <text evidence="2">The full-length protein contains only eight transmembrane helices, not nine as predicted by bioinformatics tools.</text>
</comment>
<reference key="1">
    <citation type="journal article" date="2000" name="Mol. Biol. Evol.">
        <title>Molecular phylogeny of osteoglossoids: a new model for Gondwanian origin and plate tectonic transportation of the Asian arowana.</title>
        <authorList>
            <person name="Kumazawa Y."/>
            <person name="Nishida M."/>
        </authorList>
    </citation>
    <scope>NUCLEOTIDE SEQUENCE [GENOMIC DNA]</scope>
</reference>
<keyword id="KW-0249">Electron transport</keyword>
<keyword id="KW-0349">Heme</keyword>
<keyword id="KW-0408">Iron</keyword>
<keyword id="KW-0472">Membrane</keyword>
<keyword id="KW-0479">Metal-binding</keyword>
<keyword id="KW-0496">Mitochondrion</keyword>
<keyword id="KW-0999">Mitochondrion inner membrane</keyword>
<keyword id="KW-0679">Respiratory chain</keyword>
<keyword id="KW-0812">Transmembrane</keyword>
<keyword id="KW-1133">Transmembrane helix</keyword>
<keyword id="KW-0813">Transport</keyword>
<keyword id="KW-0830">Ubiquinone</keyword>
<geneLocation type="mitochondrion"/>
<accession>Q9G0M4</accession>
<protein>
    <recommendedName>
        <fullName>Cytochrome b</fullName>
    </recommendedName>
    <alternativeName>
        <fullName>Complex III subunit 3</fullName>
    </alternativeName>
    <alternativeName>
        <fullName>Complex III subunit III</fullName>
    </alternativeName>
    <alternativeName>
        <fullName>Cytochrome b-c1 complex subunit 3</fullName>
    </alternativeName>
    <alternativeName>
        <fullName>Ubiquinol-cytochrome-c reductase complex cytochrome b subunit</fullName>
    </alternativeName>
</protein>
<dbReference type="EMBL" id="AB035241">
    <property type="protein sequence ID" value="BAB19301.1"/>
    <property type="molecule type" value="Genomic_DNA"/>
</dbReference>
<dbReference type="RefSeq" id="YP_001816868.1">
    <property type="nucleotide sequence ID" value="NC_010570.1"/>
</dbReference>
<dbReference type="SMR" id="Q9G0M4"/>
<dbReference type="GeneID" id="6197801"/>
<dbReference type="CTD" id="4519"/>
<dbReference type="GO" id="GO:0005743">
    <property type="term" value="C:mitochondrial inner membrane"/>
    <property type="evidence" value="ECO:0007669"/>
    <property type="project" value="UniProtKB-SubCell"/>
</dbReference>
<dbReference type="GO" id="GO:0045275">
    <property type="term" value="C:respiratory chain complex III"/>
    <property type="evidence" value="ECO:0007669"/>
    <property type="project" value="InterPro"/>
</dbReference>
<dbReference type="GO" id="GO:0046872">
    <property type="term" value="F:metal ion binding"/>
    <property type="evidence" value="ECO:0007669"/>
    <property type="project" value="UniProtKB-KW"/>
</dbReference>
<dbReference type="GO" id="GO:0008121">
    <property type="term" value="F:ubiquinol-cytochrome-c reductase activity"/>
    <property type="evidence" value="ECO:0007669"/>
    <property type="project" value="InterPro"/>
</dbReference>
<dbReference type="GO" id="GO:0006122">
    <property type="term" value="P:mitochondrial electron transport, ubiquinol to cytochrome c"/>
    <property type="evidence" value="ECO:0007669"/>
    <property type="project" value="TreeGrafter"/>
</dbReference>
<dbReference type="CDD" id="cd00290">
    <property type="entry name" value="cytochrome_b_C"/>
    <property type="match status" value="1"/>
</dbReference>
<dbReference type="CDD" id="cd00284">
    <property type="entry name" value="Cytochrome_b_N"/>
    <property type="match status" value="1"/>
</dbReference>
<dbReference type="FunFam" id="1.20.810.10:FF:000002">
    <property type="entry name" value="Cytochrome b"/>
    <property type="match status" value="1"/>
</dbReference>
<dbReference type="Gene3D" id="1.20.810.10">
    <property type="entry name" value="Cytochrome Bc1 Complex, Chain C"/>
    <property type="match status" value="1"/>
</dbReference>
<dbReference type="InterPro" id="IPR005798">
    <property type="entry name" value="Cyt_b/b6_C"/>
</dbReference>
<dbReference type="InterPro" id="IPR036150">
    <property type="entry name" value="Cyt_b/b6_C_sf"/>
</dbReference>
<dbReference type="InterPro" id="IPR005797">
    <property type="entry name" value="Cyt_b/b6_N"/>
</dbReference>
<dbReference type="InterPro" id="IPR027387">
    <property type="entry name" value="Cytb/b6-like_sf"/>
</dbReference>
<dbReference type="InterPro" id="IPR030689">
    <property type="entry name" value="Cytochrome_b"/>
</dbReference>
<dbReference type="InterPro" id="IPR048260">
    <property type="entry name" value="Cytochrome_b_C_euk/bac"/>
</dbReference>
<dbReference type="InterPro" id="IPR048259">
    <property type="entry name" value="Cytochrome_b_N_euk/bac"/>
</dbReference>
<dbReference type="InterPro" id="IPR016174">
    <property type="entry name" value="Di-haem_cyt_TM"/>
</dbReference>
<dbReference type="PANTHER" id="PTHR19271">
    <property type="entry name" value="CYTOCHROME B"/>
    <property type="match status" value="1"/>
</dbReference>
<dbReference type="PANTHER" id="PTHR19271:SF16">
    <property type="entry name" value="CYTOCHROME B"/>
    <property type="match status" value="1"/>
</dbReference>
<dbReference type="Pfam" id="PF00032">
    <property type="entry name" value="Cytochrom_B_C"/>
    <property type="match status" value="1"/>
</dbReference>
<dbReference type="Pfam" id="PF00033">
    <property type="entry name" value="Cytochrome_B"/>
    <property type="match status" value="1"/>
</dbReference>
<dbReference type="PIRSF" id="PIRSF038885">
    <property type="entry name" value="COB"/>
    <property type="match status" value="1"/>
</dbReference>
<dbReference type="SUPFAM" id="SSF81648">
    <property type="entry name" value="a domain/subunit of cytochrome bc1 complex (Ubiquinol-cytochrome c reductase)"/>
    <property type="match status" value="1"/>
</dbReference>
<dbReference type="SUPFAM" id="SSF81342">
    <property type="entry name" value="Transmembrane di-heme cytochromes"/>
    <property type="match status" value="1"/>
</dbReference>
<dbReference type="PROSITE" id="PS51003">
    <property type="entry name" value="CYTB_CTER"/>
    <property type="match status" value="1"/>
</dbReference>
<dbReference type="PROSITE" id="PS51002">
    <property type="entry name" value="CYTB_NTER"/>
    <property type="match status" value="1"/>
</dbReference>
<feature type="chain" id="PRO_0000060614" description="Cytochrome b">
    <location>
        <begin position="1"/>
        <end position="380"/>
    </location>
</feature>
<feature type="transmembrane region" description="Helical" evidence="2">
    <location>
        <begin position="33"/>
        <end position="53"/>
    </location>
</feature>
<feature type="transmembrane region" description="Helical" evidence="2">
    <location>
        <begin position="77"/>
        <end position="98"/>
    </location>
</feature>
<feature type="transmembrane region" description="Helical" evidence="2">
    <location>
        <begin position="113"/>
        <end position="133"/>
    </location>
</feature>
<feature type="transmembrane region" description="Helical" evidence="2">
    <location>
        <begin position="178"/>
        <end position="198"/>
    </location>
</feature>
<feature type="transmembrane region" description="Helical" evidence="2">
    <location>
        <begin position="226"/>
        <end position="246"/>
    </location>
</feature>
<feature type="transmembrane region" description="Helical" evidence="2">
    <location>
        <begin position="288"/>
        <end position="308"/>
    </location>
</feature>
<feature type="transmembrane region" description="Helical" evidence="2">
    <location>
        <begin position="320"/>
        <end position="340"/>
    </location>
</feature>
<feature type="transmembrane region" description="Helical" evidence="2">
    <location>
        <begin position="347"/>
        <end position="367"/>
    </location>
</feature>
<feature type="binding site" description="axial binding residue" evidence="2">
    <location>
        <position position="83"/>
    </location>
    <ligand>
        <name>heme b</name>
        <dbReference type="ChEBI" id="CHEBI:60344"/>
        <label>b562</label>
    </ligand>
    <ligandPart>
        <name>Fe</name>
        <dbReference type="ChEBI" id="CHEBI:18248"/>
    </ligandPart>
</feature>
<feature type="binding site" description="axial binding residue" evidence="2">
    <location>
        <position position="97"/>
    </location>
    <ligand>
        <name>heme b</name>
        <dbReference type="ChEBI" id="CHEBI:60344"/>
        <label>b566</label>
    </ligand>
    <ligandPart>
        <name>Fe</name>
        <dbReference type="ChEBI" id="CHEBI:18248"/>
    </ligandPart>
</feature>
<feature type="binding site" description="axial binding residue" evidence="2">
    <location>
        <position position="182"/>
    </location>
    <ligand>
        <name>heme b</name>
        <dbReference type="ChEBI" id="CHEBI:60344"/>
        <label>b562</label>
    </ligand>
    <ligandPart>
        <name>Fe</name>
        <dbReference type="ChEBI" id="CHEBI:18248"/>
    </ligandPart>
</feature>
<feature type="binding site" description="axial binding residue" evidence="2">
    <location>
        <position position="196"/>
    </location>
    <ligand>
        <name>heme b</name>
        <dbReference type="ChEBI" id="CHEBI:60344"/>
        <label>b566</label>
    </ligand>
    <ligandPart>
        <name>Fe</name>
        <dbReference type="ChEBI" id="CHEBI:18248"/>
    </ligandPart>
</feature>
<feature type="binding site" evidence="2">
    <location>
        <position position="201"/>
    </location>
    <ligand>
        <name>a ubiquinone</name>
        <dbReference type="ChEBI" id="CHEBI:16389"/>
    </ligand>
</feature>
<sequence length="380" mass="42751">MANLRKTHPLIKIMNDALVDLPAPSNISVWWNFGSLLGLCLITQILTGLFLAMHYTSDISTAFSSVAHICRDVNYGWLIRNLHANGASFFFICMYLHVARGLYYGSYAYKETWNIGVILLLLVMMTAFVGYVLPWGQMSFWGATVITNLLSAVPYVGDALVQWIWGGFSVDNATLTRFFAFHFILPFIVAAAVILHLLFLHETGSNNPMGLNSDTDKVYFHPYFSYKDILGFIVMLLALITLALFSPNLLGDPENFTPANPLVTPPHIKPEWYFLFAYAILRSIPNKLGGVLALLFSILVLMIVPILHTSKMQTLTFRPFSQFLFWVLVADMLILTWIGGMPVELPFIIIGQIASILYFTLFLLLIPMAGLMENKMLSLK</sequence>
<evidence type="ECO:0000250" key="1"/>
<evidence type="ECO:0000250" key="2">
    <source>
        <dbReference type="UniProtKB" id="P00157"/>
    </source>
</evidence>
<evidence type="ECO:0000255" key="3">
    <source>
        <dbReference type="PROSITE-ProRule" id="PRU00967"/>
    </source>
</evidence>
<evidence type="ECO:0000255" key="4">
    <source>
        <dbReference type="PROSITE-ProRule" id="PRU00968"/>
    </source>
</evidence>
<organism>
    <name type="scientific">Arapaima gigas</name>
    <name type="common">Arapaima</name>
    <name type="synonym">Pirarucu</name>
    <dbReference type="NCBI Taxonomy" id="113544"/>
    <lineage>
        <taxon>Eukaryota</taxon>
        <taxon>Metazoa</taxon>
        <taxon>Chordata</taxon>
        <taxon>Craniata</taxon>
        <taxon>Vertebrata</taxon>
        <taxon>Euteleostomi</taxon>
        <taxon>Actinopterygii</taxon>
        <taxon>Neopterygii</taxon>
        <taxon>Teleostei</taxon>
        <taxon>Osteoglossocephala</taxon>
        <taxon>Osteoglossomorpha</taxon>
        <taxon>Osteoglossiformes</taxon>
        <taxon>Osteoglossidae</taxon>
        <taxon>Arapaima</taxon>
    </lineage>
</organism>
<gene>
    <name type="primary">mt-cyb</name>
    <name type="synonym">cob</name>
    <name type="synonym">cytb</name>
    <name type="synonym">mtcyb</name>
</gene>